<accession>P0CF99</accession>
<accession>Q7D807</accession>
<accession>Q9RLP4</accession>
<evidence type="ECO:0000250" key="1"/>
<evidence type="ECO:0000269" key="2">
    <source>
    </source>
</evidence>
<evidence type="ECO:0000305" key="3"/>
<proteinExistence type="evidence at protein level"/>
<name>PIMC_MYCTO</name>
<comment type="function">
    <text evidence="2">Catalyzes the addition of a mannose residue from GDP-D-mannose to the position 6 of the alpha-1,6-linked mannose residue of the triacyl phosphatidylinositol dimannoside (Ac3PIM2) to generate triacyl phosphatidylinositol trimannoside (Ac3PIM3).</text>
</comment>
<comment type="pathway">
    <text>Phospholipid metabolism; phosphatidylinositol metabolism.</text>
</comment>
<comment type="similarity">
    <text evidence="3">Belongs to the glycosyltransferase group 1 family.</text>
</comment>
<organism>
    <name type="scientific">Mycobacterium tuberculosis (strain CDC 1551 / Oshkosh)</name>
    <dbReference type="NCBI Taxonomy" id="83331"/>
    <lineage>
        <taxon>Bacteria</taxon>
        <taxon>Bacillati</taxon>
        <taxon>Actinomycetota</taxon>
        <taxon>Actinomycetes</taxon>
        <taxon>Mycobacteriales</taxon>
        <taxon>Mycobacteriaceae</taxon>
        <taxon>Mycobacterium</taxon>
        <taxon>Mycobacterium tuberculosis complex</taxon>
    </lineage>
</organism>
<reference key="1">
    <citation type="journal article" date="2002" name="J. Bacteriol.">
        <title>Whole-genome comparison of Mycobacterium tuberculosis clinical and laboratory strains.</title>
        <authorList>
            <person name="Fleischmann R.D."/>
            <person name="Alland D."/>
            <person name="Eisen J.A."/>
            <person name="Carpenter L."/>
            <person name="White O."/>
            <person name="Peterson J.D."/>
            <person name="DeBoy R.T."/>
            <person name="Dodson R.J."/>
            <person name="Gwinn M.L."/>
            <person name="Haft D.H."/>
            <person name="Hickey E.K."/>
            <person name="Kolonay J.F."/>
            <person name="Nelson W.C."/>
            <person name="Umayam L.A."/>
            <person name="Ermolaeva M.D."/>
            <person name="Salzberg S.L."/>
            <person name="Delcher A."/>
            <person name="Utterback T.R."/>
            <person name="Weidman J.F."/>
            <person name="Khouri H.M."/>
            <person name="Gill J."/>
            <person name="Mikula A."/>
            <person name="Bishai W."/>
            <person name="Jacobs W.R. Jr."/>
            <person name="Venter J.C."/>
            <person name="Fraser C.M."/>
        </authorList>
    </citation>
    <scope>NUCLEOTIDE SEQUENCE [LARGE SCALE GENOMIC DNA]</scope>
    <source>
        <strain>CDC 1551 / Oshkosh</strain>
    </source>
</reference>
<reference key="2">
    <citation type="journal article" date="1999" name="Infect. Immun.">
        <title>Genomic analysis reveals variation between Mycobacterium tuberculosis H37Rv and the attenuated M. tuberculosis H37Ra.</title>
        <authorList>
            <person name="Brosch R."/>
            <person name="Philipp W."/>
            <person name="Stavropoulos E."/>
            <person name="Colston M.J."/>
            <person name="Cole S.T."/>
            <person name="Gordon S.V."/>
        </authorList>
    </citation>
    <scope>LACK OF A MANNOSYLTRANSFERASE IN STRAIN H37RV</scope>
</reference>
<reference key="3">
    <citation type="journal article" date="2002" name="Biochem. J.">
        <title>Characterization of a putative alpha-mannosyltransferase involved in phosphatidylinositol trimannoside biosynthesis in Mycobacterium tuberculosis.</title>
        <authorList>
            <person name="Kremer L."/>
            <person name="Gurcha S.S."/>
            <person name="Bifani P."/>
            <person name="Hitchen P.G."/>
            <person name="Baulard A."/>
            <person name="Morris H.R."/>
            <person name="Dell A."/>
            <person name="Brennan P.J."/>
            <person name="Besra G.S."/>
        </authorList>
    </citation>
    <scope>FUNCTION IN AC3PIM3 BIOSYNTHESIS</scope>
</reference>
<feature type="chain" id="PRO_0000393736" description="GDP-mannose-dependent alpha-(1-6)-phosphatidylinositol dimannoside mannosyltransferase">
    <location>
        <begin position="1"/>
        <end position="381"/>
    </location>
</feature>
<feature type="binding site" evidence="1">
    <location>
        <position position="16"/>
    </location>
    <ligand>
        <name>substrate</name>
    </ligand>
</feature>
<feature type="binding site" evidence="1">
    <location>
        <position position="207"/>
    </location>
    <ligand>
        <name>substrate</name>
    </ligand>
</feature>
<feature type="binding site" evidence="1">
    <location>
        <begin position="211"/>
        <end position="212"/>
    </location>
    <ligand>
        <name>substrate</name>
    </ligand>
</feature>
<feature type="binding site" evidence="1">
    <location>
        <begin position="283"/>
        <end position="287"/>
    </location>
    <ligand>
        <name>substrate</name>
    </ligand>
</feature>
<feature type="binding site" evidence="1">
    <location>
        <position position="291"/>
    </location>
    <ligand>
        <name>substrate</name>
    </ligand>
</feature>
<feature type="site" description="Important for catalytic activity" evidence="1">
    <location>
        <position position="283"/>
    </location>
</feature>
<gene>
    <name type="primary">pimC</name>
    <name type="synonym">RvD2-ORF1</name>
    <name type="ordered locus">MT1800</name>
</gene>
<protein>
    <recommendedName>
        <fullName>GDP-mannose-dependent alpha-(1-6)-phosphatidylinositol dimannoside mannosyltransferase</fullName>
        <ecNumber>2.4.1.-</ecNumber>
    </recommendedName>
    <alternativeName>
        <fullName>Alpha-D-mannose-alpha-(1-6)-phosphatidylmyo-inositol-mannosyltransferase</fullName>
    </alternativeName>
    <alternativeName>
        <fullName>Guanosine diphosphomannose-phosphatidyl-inositol alpha-mannosyltransferase</fullName>
    </alternativeName>
    <alternativeName>
        <fullName>Phosphatidylinositol alpha-mannosyltransferase</fullName>
        <shortName>PI alpha-mannosyltransferase</shortName>
    </alternativeName>
</protein>
<dbReference type="EC" id="2.4.1.-"/>
<dbReference type="EMBL" id="AE000516">
    <property type="protein sequence ID" value="AAK46073.1"/>
    <property type="molecule type" value="Genomic_DNA"/>
</dbReference>
<dbReference type="RefSeq" id="WP_003899004.1">
    <property type="nucleotide sequence ID" value="NZ_KK341227.1"/>
</dbReference>
<dbReference type="SMR" id="P0CF99"/>
<dbReference type="CAZy" id="GT4">
    <property type="family name" value="Glycosyltransferase Family 4"/>
</dbReference>
<dbReference type="KEGG" id="mtc:MT1800"/>
<dbReference type="PATRIC" id="fig|83331.31.peg.1934"/>
<dbReference type="HOGENOM" id="CLU_009583_10_1_11"/>
<dbReference type="BioCyc" id="MetaCyc:GT3Z-6196-MONOMER"/>
<dbReference type="UniPathway" id="UPA00949"/>
<dbReference type="Proteomes" id="UP000001020">
    <property type="component" value="Chromosome"/>
</dbReference>
<dbReference type="GO" id="GO:0016020">
    <property type="term" value="C:membrane"/>
    <property type="evidence" value="ECO:0000314"/>
    <property type="project" value="UniProtKB"/>
</dbReference>
<dbReference type="GO" id="GO:0033164">
    <property type="term" value="F:glycolipid 1,6-alpha-mannosyltransferase activity"/>
    <property type="evidence" value="ECO:0000314"/>
    <property type="project" value="UniProtKB"/>
</dbReference>
<dbReference type="GO" id="GO:0047264">
    <property type="term" value="F:heteroglycan alpha-mannosyltransferase activity"/>
    <property type="evidence" value="ECO:0000314"/>
    <property type="project" value="MTBBASE"/>
</dbReference>
<dbReference type="GO" id="GO:0043750">
    <property type="term" value="F:phosphatidylinositol alpha-mannosyltransferase activity"/>
    <property type="evidence" value="ECO:0000314"/>
    <property type="project" value="UniProtKB"/>
</dbReference>
<dbReference type="GO" id="GO:0046474">
    <property type="term" value="P:glycerophospholipid biosynthetic process"/>
    <property type="evidence" value="ECO:0000314"/>
    <property type="project" value="MTBBASE"/>
</dbReference>
<dbReference type="GO" id="GO:0009247">
    <property type="term" value="P:glycolipid biosynthetic process"/>
    <property type="evidence" value="ECO:0000314"/>
    <property type="project" value="UniProtKB"/>
</dbReference>
<dbReference type="GO" id="GO:0046488">
    <property type="term" value="P:phosphatidylinositol metabolic process"/>
    <property type="evidence" value="ECO:0007669"/>
    <property type="project" value="UniProtKB-UniPathway"/>
</dbReference>
<dbReference type="Gene3D" id="3.40.50.2000">
    <property type="entry name" value="Glycogen Phosphorylase B"/>
    <property type="match status" value="2"/>
</dbReference>
<dbReference type="InterPro" id="IPR001296">
    <property type="entry name" value="Glyco_trans_1"/>
</dbReference>
<dbReference type="InterPro" id="IPR028098">
    <property type="entry name" value="Glyco_trans_4-like_N"/>
</dbReference>
<dbReference type="InterPro" id="IPR050194">
    <property type="entry name" value="Glycosyltransferase_grp1"/>
</dbReference>
<dbReference type="PANTHER" id="PTHR45947">
    <property type="entry name" value="SULFOQUINOVOSYL TRANSFERASE SQD2"/>
    <property type="match status" value="1"/>
</dbReference>
<dbReference type="PANTHER" id="PTHR45947:SF3">
    <property type="entry name" value="SULFOQUINOVOSYL TRANSFERASE SQD2"/>
    <property type="match status" value="1"/>
</dbReference>
<dbReference type="Pfam" id="PF13579">
    <property type="entry name" value="Glyco_trans_4_4"/>
    <property type="match status" value="1"/>
</dbReference>
<dbReference type="Pfam" id="PF00534">
    <property type="entry name" value="Glycos_transf_1"/>
    <property type="match status" value="1"/>
</dbReference>
<dbReference type="SUPFAM" id="SSF53756">
    <property type="entry name" value="UDP-Glycosyltransferase/glycogen phosphorylase"/>
    <property type="match status" value="1"/>
</dbReference>
<keyword id="KW-0328">Glycosyltransferase</keyword>
<keyword id="KW-0444">Lipid biosynthesis</keyword>
<keyword id="KW-0443">Lipid metabolism</keyword>
<keyword id="KW-0594">Phospholipid biosynthesis</keyword>
<keyword id="KW-1208">Phospholipid metabolism</keyword>
<keyword id="KW-1185">Reference proteome</keyword>
<keyword id="KW-0808">Transferase</keyword>
<keyword id="KW-0843">Virulence</keyword>
<sequence>MRVVQVANFYGPRSGGLRTAVDRLGAEYCASGHEVFLIVPGARTERHLLRTGVVRITLPAKHIPYTGGYRAVMPGAVRTVLETLRPDALEVSDRLTLRSLGRWGREHGVTTVMISHERLDRFAGQLLPRRAAQKFADFANARTAANYDTVVCTTGFAREEFDRIGATNTVTVPLGVDLKTFHPRRRCARVRQHWATPTQILLVHCGRLSVEKHADRSIDALAALCDAGVDARLVIAGEGPLRARLERKATGLPIDFTGFISDRHAVAGLLASADVALAPGPHETFGLAALESLACGTPAVVSRTSALTEIITADSGACADNRPEAIAHAVRTIVSRPERHRRRCARRRAEIFTWQRAAASMLATLGAMAVSTRCGDTQDTA</sequence>